<comment type="function">
    <text evidence="1">Binds and transactivates the retinoic acid response elements that control expression of the retinoic acid receptor beta 2 and alcohol dehydrogenase 3 genes. Transactivates both the phenobarbital responsive element module of the human CYP2B6 gene and the CYP3A4 xenobiotic response element (By similarity).</text>
</comment>
<comment type="subunit">
    <text evidence="2">Heterodimer of NR1I3 and RXR. Interacts with PSMC4. Interacts with ECT2. Directly interacts with DNAJC7; this complex may also include HSP90 (By similarity). Interacts with CRY1 (By similarity). Interacts with CRY2 in a ligand-dependent manner (By similarity).</text>
</comment>
<comment type="subcellular location">
    <subcellularLocation>
        <location evidence="4">Nucleus</location>
    </subcellularLocation>
    <subcellularLocation>
        <location evidence="1">Cytoplasm</location>
    </subcellularLocation>
    <subcellularLocation>
        <location evidence="1">Cytoplasm</location>
        <location evidence="1">Cytoskeleton</location>
    </subcellularLocation>
    <text evidence="1">Recruited to the cytoplasm by DNAJC7.</text>
</comment>
<comment type="domain">
    <text>Composed by a short N-terminal domain followed by the DNA binding, hinge, and ligand binding/dimerization domains.</text>
</comment>
<comment type="PTM">
    <text evidence="1">Phosphorylated at Thr-38 by PKC, dephosphorylation of Thr-38 is required for nuclear translocation and activation.</text>
</comment>
<comment type="similarity">
    <text evidence="6">Belongs to the nuclear hormone receptor family. NR1 subfamily.</text>
</comment>
<evidence type="ECO:0000250" key="1"/>
<evidence type="ECO:0000250" key="2">
    <source>
        <dbReference type="UniProtKB" id="O35627"/>
    </source>
</evidence>
<evidence type="ECO:0000250" key="3">
    <source>
        <dbReference type="UniProtKB" id="Q14994"/>
    </source>
</evidence>
<evidence type="ECO:0000255" key="4">
    <source>
        <dbReference type="PROSITE-ProRule" id="PRU00407"/>
    </source>
</evidence>
<evidence type="ECO:0000255" key="5">
    <source>
        <dbReference type="PROSITE-ProRule" id="PRU01189"/>
    </source>
</evidence>
<evidence type="ECO:0000305" key="6"/>
<keyword id="KW-0010">Activator</keyword>
<keyword id="KW-0963">Cytoplasm</keyword>
<keyword id="KW-0206">Cytoskeleton</keyword>
<keyword id="KW-0238">DNA-binding</keyword>
<keyword id="KW-0479">Metal-binding</keyword>
<keyword id="KW-0539">Nucleus</keyword>
<keyword id="KW-0597">Phosphoprotein</keyword>
<keyword id="KW-0675">Receptor</keyword>
<keyword id="KW-1185">Reference proteome</keyword>
<keyword id="KW-0804">Transcription</keyword>
<keyword id="KW-0805">Transcription regulation</keyword>
<keyword id="KW-0862">Zinc</keyword>
<keyword id="KW-0863">Zinc-finger</keyword>
<protein>
    <recommendedName>
        <fullName>Nuclear receptor subfamily 1 group I member 3</fullName>
    </recommendedName>
    <alternativeName>
        <fullName>Constitutive androstane receptor</fullName>
        <shortName>CAR</shortName>
    </alternativeName>
</protein>
<accession>A2T7D9</accession>
<proteinExistence type="inferred from homology"/>
<feature type="chain" id="PRO_0000285531" description="Nuclear receptor subfamily 1 group I member 3">
    <location>
        <begin position="1"/>
        <end position="348"/>
    </location>
</feature>
<feature type="domain" description="NR LBD" evidence="5">
    <location>
        <begin position="109"/>
        <end position="348"/>
    </location>
</feature>
<feature type="DNA-binding region" description="Nuclear receptor" evidence="4">
    <location>
        <begin position="8"/>
        <end position="83"/>
    </location>
</feature>
<feature type="zinc finger region" description="NR C4-type" evidence="4">
    <location>
        <begin position="11"/>
        <end position="31"/>
    </location>
</feature>
<feature type="zinc finger region" description="NR C4-type" evidence="4">
    <location>
        <begin position="47"/>
        <end position="71"/>
    </location>
</feature>
<feature type="modified residue" description="Phosphothreonine; by PKC" evidence="3">
    <location>
        <position position="38"/>
    </location>
</feature>
<dbReference type="EMBL" id="DQ977427">
    <property type="protein sequence ID" value="ABM92094.1"/>
    <property type="molecule type" value="Genomic_DNA"/>
</dbReference>
<dbReference type="RefSeq" id="NP_001129087.1">
    <property type="nucleotide sequence ID" value="NM_001135615.1"/>
</dbReference>
<dbReference type="SMR" id="A2T7D9"/>
<dbReference type="STRING" id="9598.ENSPTRP00000075465"/>
<dbReference type="PaxDb" id="9598-ENSPTRP00000002647"/>
<dbReference type="GeneID" id="458014"/>
<dbReference type="KEGG" id="ptr:458014"/>
<dbReference type="CTD" id="9970"/>
<dbReference type="eggNOG" id="KOG3575">
    <property type="taxonomic scope" value="Eukaryota"/>
</dbReference>
<dbReference type="InParanoid" id="A2T7D9"/>
<dbReference type="Proteomes" id="UP000002277">
    <property type="component" value="Unplaced"/>
</dbReference>
<dbReference type="GO" id="GO:0000785">
    <property type="term" value="C:chromatin"/>
    <property type="evidence" value="ECO:0000318"/>
    <property type="project" value="GO_Central"/>
</dbReference>
<dbReference type="GO" id="GO:0005737">
    <property type="term" value="C:cytoplasm"/>
    <property type="evidence" value="ECO:0000250"/>
    <property type="project" value="UniProtKB"/>
</dbReference>
<dbReference type="GO" id="GO:0005856">
    <property type="term" value="C:cytoskeleton"/>
    <property type="evidence" value="ECO:0007669"/>
    <property type="project" value="UniProtKB-SubCell"/>
</dbReference>
<dbReference type="GO" id="GO:0005654">
    <property type="term" value="C:nucleoplasm"/>
    <property type="evidence" value="ECO:0007669"/>
    <property type="project" value="UniProtKB-ARBA"/>
</dbReference>
<dbReference type="GO" id="GO:0005634">
    <property type="term" value="C:nucleus"/>
    <property type="evidence" value="ECO:0000250"/>
    <property type="project" value="UniProtKB"/>
</dbReference>
<dbReference type="GO" id="GO:0034056">
    <property type="term" value="F:estrogen response element binding"/>
    <property type="evidence" value="ECO:0000318"/>
    <property type="project" value="GO_Central"/>
</dbReference>
<dbReference type="GO" id="GO:0004879">
    <property type="term" value="F:nuclear receptor activity"/>
    <property type="evidence" value="ECO:0000318"/>
    <property type="project" value="GO_Central"/>
</dbReference>
<dbReference type="GO" id="GO:0008270">
    <property type="term" value="F:zinc ion binding"/>
    <property type="evidence" value="ECO:0007669"/>
    <property type="project" value="UniProtKB-KW"/>
</dbReference>
<dbReference type="GO" id="GO:0006357">
    <property type="term" value="P:regulation of transcription by RNA polymerase II"/>
    <property type="evidence" value="ECO:0000318"/>
    <property type="project" value="GO_Central"/>
</dbReference>
<dbReference type="CDD" id="cd07156">
    <property type="entry name" value="NR_DBD_VDR_like"/>
    <property type="match status" value="1"/>
</dbReference>
<dbReference type="CDD" id="cd06934">
    <property type="entry name" value="NR_LBD_PXR_like"/>
    <property type="match status" value="1"/>
</dbReference>
<dbReference type="FunFam" id="1.10.565.10:FF:000025">
    <property type="entry name" value="Nuclear receptor subfamily 1 group I member 3"/>
    <property type="match status" value="1"/>
</dbReference>
<dbReference type="FunFam" id="3.30.50.10:FF:000035">
    <property type="entry name" value="Nuclear receptor subfamily 1 group I member 3"/>
    <property type="match status" value="1"/>
</dbReference>
<dbReference type="Gene3D" id="3.30.50.10">
    <property type="entry name" value="Erythroid Transcription Factor GATA-1, subunit A"/>
    <property type="match status" value="1"/>
</dbReference>
<dbReference type="Gene3D" id="1.10.565.10">
    <property type="entry name" value="Retinoid X Receptor"/>
    <property type="match status" value="1"/>
</dbReference>
<dbReference type="InterPro" id="IPR035500">
    <property type="entry name" value="NHR-like_dom_sf"/>
</dbReference>
<dbReference type="InterPro" id="IPR000536">
    <property type="entry name" value="Nucl_hrmn_rcpt_lig-bd"/>
</dbReference>
<dbReference type="InterPro" id="IPR050234">
    <property type="entry name" value="Nuclear_hormone_rcpt_NR1"/>
</dbReference>
<dbReference type="InterPro" id="IPR001723">
    <property type="entry name" value="Nuclear_hrmn_rcpt"/>
</dbReference>
<dbReference type="InterPro" id="IPR001728">
    <property type="entry name" value="ThyrH_rcpt"/>
</dbReference>
<dbReference type="InterPro" id="IPR001628">
    <property type="entry name" value="Znf_hrmn_rcpt"/>
</dbReference>
<dbReference type="InterPro" id="IPR013088">
    <property type="entry name" value="Znf_NHR/GATA"/>
</dbReference>
<dbReference type="PANTHER" id="PTHR24082">
    <property type="entry name" value="NUCLEAR HORMONE RECEPTOR"/>
    <property type="match status" value="1"/>
</dbReference>
<dbReference type="PANTHER" id="PTHR24082:SF231">
    <property type="entry name" value="NUCLEAR RECEPTOR SUBFAMILY 1 GROUP I MEMBER 3"/>
    <property type="match status" value="1"/>
</dbReference>
<dbReference type="Pfam" id="PF00104">
    <property type="entry name" value="Hormone_recep"/>
    <property type="match status" value="1"/>
</dbReference>
<dbReference type="Pfam" id="PF00105">
    <property type="entry name" value="zf-C4"/>
    <property type="match status" value="1"/>
</dbReference>
<dbReference type="PRINTS" id="PR00398">
    <property type="entry name" value="STRDHORMONER"/>
</dbReference>
<dbReference type="PRINTS" id="PR00047">
    <property type="entry name" value="STROIDFINGER"/>
</dbReference>
<dbReference type="PRINTS" id="PR00546">
    <property type="entry name" value="THYROIDHORMR"/>
</dbReference>
<dbReference type="SMART" id="SM00430">
    <property type="entry name" value="HOLI"/>
    <property type="match status" value="1"/>
</dbReference>
<dbReference type="SMART" id="SM00399">
    <property type="entry name" value="ZnF_C4"/>
    <property type="match status" value="1"/>
</dbReference>
<dbReference type="SUPFAM" id="SSF57716">
    <property type="entry name" value="Glucocorticoid receptor-like (DNA-binding domain)"/>
    <property type="match status" value="1"/>
</dbReference>
<dbReference type="SUPFAM" id="SSF48508">
    <property type="entry name" value="Nuclear receptor ligand-binding domain"/>
    <property type="match status" value="1"/>
</dbReference>
<dbReference type="PROSITE" id="PS51843">
    <property type="entry name" value="NR_LBD"/>
    <property type="match status" value="1"/>
</dbReference>
<dbReference type="PROSITE" id="PS00031">
    <property type="entry name" value="NUCLEAR_REC_DBD_1"/>
    <property type="match status" value="1"/>
</dbReference>
<dbReference type="PROSITE" id="PS51030">
    <property type="entry name" value="NUCLEAR_REC_DBD_2"/>
    <property type="match status" value="1"/>
</dbReference>
<gene>
    <name type="primary">NR1I3</name>
    <name type="synonym">CAR</name>
</gene>
<organism>
    <name type="scientific">Pan troglodytes</name>
    <name type="common">Chimpanzee</name>
    <dbReference type="NCBI Taxonomy" id="9598"/>
    <lineage>
        <taxon>Eukaryota</taxon>
        <taxon>Metazoa</taxon>
        <taxon>Chordata</taxon>
        <taxon>Craniata</taxon>
        <taxon>Vertebrata</taxon>
        <taxon>Euteleostomi</taxon>
        <taxon>Mammalia</taxon>
        <taxon>Eutheria</taxon>
        <taxon>Euarchontoglires</taxon>
        <taxon>Primates</taxon>
        <taxon>Haplorrhini</taxon>
        <taxon>Catarrhini</taxon>
        <taxon>Hominidae</taxon>
        <taxon>Pan</taxon>
    </lineage>
</organism>
<name>NR1I3_PANTR</name>
<sequence length="348" mass="39558">MASREDELRNCVVCGDQATGYHFNALTCEGCKGFFRRTVSKSIGPTCPFAGSCEVSKTQRRHCPACRLQKCLDAGMRKDMILSAEALALRRAKQAQRRAQQTPVQLSKEQEELIRTLLGAHTRHMGTMFEQFVQFRPPAHLFIHHQPLPTLAPVLPLVTHFADINTFMVLQVIKFTKDLPVFRSLPIEDQISLLKGAAVEICHIVLNTTFCLQTQNFLCGPLRYTIEDGARVGFQVEFLELLFHFHGTLRKLQLQEPEYVLLAAMALFSPDRPGVTQRDEIDQLQEEMALTLQSYIKGQQRRPRDRFLYAKLLGLLAELRSINEAYGYQIQHIQGLSAMMPLLQEICS</sequence>
<reference key="1">
    <citation type="submission" date="2006-08" db="EMBL/GenBank/DDBJ databases">
        <title>Positive selection in transcription factor genes on the human lineage.</title>
        <authorList>
            <person name="Nickel G.C."/>
            <person name="Tefft D.L."/>
            <person name="Trevarthen K."/>
            <person name="Funt J."/>
            <person name="Adams M.D."/>
        </authorList>
    </citation>
    <scope>NUCLEOTIDE SEQUENCE [GENOMIC DNA]</scope>
</reference>